<reference key="1">
    <citation type="journal article" date="2001" name="DNA Res.">
        <title>Complete genomic sequence of the filamentous nitrogen-fixing cyanobacterium Anabaena sp. strain PCC 7120.</title>
        <authorList>
            <person name="Kaneko T."/>
            <person name="Nakamura Y."/>
            <person name="Wolk C.P."/>
            <person name="Kuritz T."/>
            <person name="Sasamoto S."/>
            <person name="Watanabe A."/>
            <person name="Iriguchi M."/>
            <person name="Ishikawa A."/>
            <person name="Kawashima K."/>
            <person name="Kimura T."/>
            <person name="Kishida Y."/>
            <person name="Kohara M."/>
            <person name="Matsumoto M."/>
            <person name="Matsuno A."/>
            <person name="Muraki A."/>
            <person name="Nakazaki N."/>
            <person name="Shimpo S."/>
            <person name="Sugimoto M."/>
            <person name="Takazawa M."/>
            <person name="Yamada M."/>
            <person name="Yasuda M."/>
            <person name="Tabata S."/>
        </authorList>
    </citation>
    <scope>NUCLEOTIDE SEQUENCE [LARGE SCALE GENOMIC DNA]</scope>
    <source>
        <strain>PCC 7120 / SAG 25.82 / UTEX 2576</strain>
    </source>
</reference>
<reference key="2">
    <citation type="journal article" date="2006" name="J. Biol. Chem.">
        <title>Chromophore attachment to phycobiliprotein beta-subunits: phycocyanobilin:cysteine-beta84 phycobiliprotein lyase activity of CpeS-like protein from Anabaena Sp. PCC7120.</title>
        <authorList>
            <person name="Zhao K.H."/>
            <person name="Su P."/>
            <person name="Li J."/>
            <person name="Tu J.M."/>
            <person name="Zhou M."/>
            <person name="Bubenzer C."/>
            <person name="Scheer H."/>
        </authorList>
    </citation>
    <scope>FUNCTION</scope>
    <source>
        <strain>PCC 7120 / SAG 25.82 / UTEX 2576</strain>
    </source>
</reference>
<proteinExistence type="inferred from homology"/>
<protein>
    <recommendedName>
        <fullName>Heme oxygenase 1</fullName>
        <ecNumber evidence="2">1.14.14.18</ecNumber>
    </recommendedName>
</protein>
<evidence type="ECO:0000250" key="1"/>
<evidence type="ECO:0000250" key="2">
    <source>
        <dbReference type="UniProtKB" id="O48782"/>
    </source>
</evidence>
<evidence type="ECO:0000269" key="3">
    <source>
    </source>
</evidence>
<evidence type="ECO:0000305" key="4"/>
<gene>
    <name type="primary">pbsA1</name>
    <name type="ordered locus">all1897</name>
</gene>
<keyword id="KW-0349">Heme</keyword>
<keyword id="KW-0408">Iron</keyword>
<keyword id="KW-0479">Metal-binding</keyword>
<keyword id="KW-0560">Oxidoreductase</keyword>
<keyword id="KW-0602">Photosynthesis</keyword>
<keyword id="KW-1185">Reference proteome</keyword>
<organism>
    <name type="scientific">Nostoc sp. (strain PCC 7120 / SAG 25.82 / UTEX 2576)</name>
    <dbReference type="NCBI Taxonomy" id="103690"/>
    <lineage>
        <taxon>Bacteria</taxon>
        <taxon>Bacillati</taxon>
        <taxon>Cyanobacteriota</taxon>
        <taxon>Cyanophyceae</taxon>
        <taxon>Nostocales</taxon>
        <taxon>Nostocaceae</taxon>
        <taxon>Nostoc</taxon>
    </lineage>
</organism>
<accession>Q8YVS7</accession>
<feature type="chain" id="PRO_0000403173" description="Heme oxygenase 1">
    <location>
        <begin position="1"/>
        <end position="238"/>
    </location>
</feature>
<comment type="function">
    <text evidence="1 3">Catalyzes the opening of the heme ring with the release of iron. Key enzyme in the synthesis of the chromophoric part of the photosynthetic antennae (By similarity). Upon overexpression in E.coli with PCB:ferredoxin oxidoreductase, CpeS and either CpcB or PecB permits synthesis of phycocyanin-coupled CpcB or PecB.</text>
</comment>
<comment type="catalytic activity">
    <reaction evidence="2">
        <text>heme b + 3 reduced [NADPH--hemoprotein reductase] + 3 O2 = biliverdin IXalpha + CO + Fe(2+) + 3 oxidized [NADPH--hemoprotein reductase] + 3 H2O + H(+)</text>
        <dbReference type="Rhea" id="RHEA:21764"/>
        <dbReference type="Rhea" id="RHEA-COMP:11964"/>
        <dbReference type="Rhea" id="RHEA-COMP:11965"/>
        <dbReference type="ChEBI" id="CHEBI:15377"/>
        <dbReference type="ChEBI" id="CHEBI:15378"/>
        <dbReference type="ChEBI" id="CHEBI:15379"/>
        <dbReference type="ChEBI" id="CHEBI:17245"/>
        <dbReference type="ChEBI" id="CHEBI:29033"/>
        <dbReference type="ChEBI" id="CHEBI:57618"/>
        <dbReference type="ChEBI" id="CHEBI:57991"/>
        <dbReference type="ChEBI" id="CHEBI:58210"/>
        <dbReference type="ChEBI" id="CHEBI:60344"/>
        <dbReference type="EC" id="1.14.14.18"/>
    </reaction>
</comment>
<comment type="similarity">
    <text evidence="4">Belongs to the heme oxygenase family.</text>
</comment>
<dbReference type="EC" id="1.14.14.18" evidence="2"/>
<dbReference type="EMBL" id="BA000019">
    <property type="protein sequence ID" value="BAB73596.1"/>
    <property type="molecule type" value="Genomic_DNA"/>
</dbReference>
<dbReference type="PIR" id="AC2043">
    <property type="entry name" value="AC2043"/>
</dbReference>
<dbReference type="RefSeq" id="WP_010996061.1">
    <property type="nucleotide sequence ID" value="NZ_RSCN01000017.1"/>
</dbReference>
<dbReference type="SMR" id="Q8YVS7"/>
<dbReference type="STRING" id="103690.gene:10493916"/>
<dbReference type="KEGG" id="ana:all1897"/>
<dbReference type="eggNOG" id="COG5398">
    <property type="taxonomic scope" value="Bacteria"/>
</dbReference>
<dbReference type="OrthoDB" id="5493802at2"/>
<dbReference type="BioCyc" id="MetaCyc:MONOMER-18996"/>
<dbReference type="Proteomes" id="UP000002483">
    <property type="component" value="Chromosome"/>
</dbReference>
<dbReference type="GO" id="GO:0020037">
    <property type="term" value="F:heme binding"/>
    <property type="evidence" value="ECO:0007669"/>
    <property type="project" value="TreeGrafter"/>
</dbReference>
<dbReference type="GO" id="GO:0004392">
    <property type="term" value="F:heme oxygenase (decyclizing) activity"/>
    <property type="evidence" value="ECO:0007669"/>
    <property type="project" value="UniProtKB-EC"/>
</dbReference>
<dbReference type="GO" id="GO:0046872">
    <property type="term" value="F:metal ion binding"/>
    <property type="evidence" value="ECO:0007669"/>
    <property type="project" value="UniProtKB-KW"/>
</dbReference>
<dbReference type="GO" id="GO:0042167">
    <property type="term" value="P:heme catabolic process"/>
    <property type="evidence" value="ECO:0007669"/>
    <property type="project" value="TreeGrafter"/>
</dbReference>
<dbReference type="GO" id="GO:0006788">
    <property type="term" value="P:heme oxidation"/>
    <property type="evidence" value="ECO:0007669"/>
    <property type="project" value="InterPro"/>
</dbReference>
<dbReference type="GO" id="GO:0015979">
    <property type="term" value="P:photosynthesis"/>
    <property type="evidence" value="ECO:0007669"/>
    <property type="project" value="UniProtKB-KW"/>
</dbReference>
<dbReference type="GO" id="GO:0006979">
    <property type="term" value="P:response to oxidative stress"/>
    <property type="evidence" value="ECO:0007669"/>
    <property type="project" value="TreeGrafter"/>
</dbReference>
<dbReference type="CDD" id="cd19165">
    <property type="entry name" value="HemeO"/>
    <property type="match status" value="1"/>
</dbReference>
<dbReference type="FunFam" id="1.20.910.10:FF:000001">
    <property type="entry name" value="Heme oxygenase 1"/>
    <property type="match status" value="1"/>
</dbReference>
<dbReference type="Gene3D" id="1.20.910.10">
    <property type="entry name" value="Heme oxygenase-like"/>
    <property type="match status" value="1"/>
</dbReference>
<dbReference type="InterPro" id="IPR002051">
    <property type="entry name" value="Haem_Oase"/>
</dbReference>
<dbReference type="InterPro" id="IPR016053">
    <property type="entry name" value="Haem_Oase-like"/>
</dbReference>
<dbReference type="InterPro" id="IPR016084">
    <property type="entry name" value="Haem_Oase-like_multi-hlx"/>
</dbReference>
<dbReference type="InterPro" id="IPR018207">
    <property type="entry name" value="Haem_oxygenase_CS"/>
</dbReference>
<dbReference type="PANTHER" id="PTHR10720">
    <property type="entry name" value="HEME OXYGENASE"/>
    <property type="match status" value="1"/>
</dbReference>
<dbReference type="PANTHER" id="PTHR10720:SF0">
    <property type="entry name" value="HEME OXYGENASE"/>
    <property type="match status" value="1"/>
</dbReference>
<dbReference type="Pfam" id="PF01126">
    <property type="entry name" value="Heme_oxygenase"/>
    <property type="match status" value="1"/>
</dbReference>
<dbReference type="PIRSF" id="PIRSF000343">
    <property type="entry name" value="Haem_Oase"/>
    <property type="match status" value="1"/>
</dbReference>
<dbReference type="PRINTS" id="PR00088">
    <property type="entry name" value="HAEMOXYGNASE"/>
</dbReference>
<dbReference type="SUPFAM" id="SSF48613">
    <property type="entry name" value="Heme oxygenase-like"/>
    <property type="match status" value="1"/>
</dbReference>
<dbReference type="PROSITE" id="PS00593">
    <property type="entry name" value="HEME_OXYGENASE"/>
    <property type="match status" value="1"/>
</dbReference>
<sequence>MSSNLANKLRVGTKKAHTMAENVGFVKCFLKGVVEKSSYRKLVANFYYVYSAMEEEMEKHSQHPIVSKINFSQLNRKQTLEQDLSYYYGANWREQIQLSPAGEAYVQRIREISATEPELLIAHSYTRYLGDLSGGQILKNIAVTAMNLNDGQGTAFYEFADISDEKAFKAKYRQTLDELAIDEATGDRIVDEANAAFGMNMKMFQELEGNLIKAIGMMLFNTLTRKRTRGATELATAE</sequence>
<name>HO1_NOSS1</name>